<protein>
    <recommendedName>
        <fullName evidence="1">Small ribosomal subunit protein uS4</fullName>
    </recommendedName>
    <alternativeName>
        <fullName evidence="2">30S ribosomal protein S4</fullName>
    </alternativeName>
</protein>
<proteinExistence type="inferred from homology"/>
<accession>A8GRQ0</accession>
<dbReference type="EMBL" id="CP000848">
    <property type="protein sequence ID" value="ABV76075.1"/>
    <property type="molecule type" value="Genomic_DNA"/>
</dbReference>
<dbReference type="RefSeq" id="WP_010977111.1">
    <property type="nucleotide sequence ID" value="NC_009882.1"/>
</dbReference>
<dbReference type="SMR" id="A8GRQ0"/>
<dbReference type="GeneID" id="34514262"/>
<dbReference type="GeneID" id="928700"/>
<dbReference type="KEGG" id="rri:A1G_02650"/>
<dbReference type="HOGENOM" id="CLU_092403_0_0_5"/>
<dbReference type="Proteomes" id="UP000006832">
    <property type="component" value="Chromosome"/>
</dbReference>
<dbReference type="GO" id="GO:0015935">
    <property type="term" value="C:small ribosomal subunit"/>
    <property type="evidence" value="ECO:0007669"/>
    <property type="project" value="InterPro"/>
</dbReference>
<dbReference type="GO" id="GO:0019843">
    <property type="term" value="F:rRNA binding"/>
    <property type="evidence" value="ECO:0007669"/>
    <property type="project" value="UniProtKB-UniRule"/>
</dbReference>
<dbReference type="GO" id="GO:0003735">
    <property type="term" value="F:structural constituent of ribosome"/>
    <property type="evidence" value="ECO:0007669"/>
    <property type="project" value="InterPro"/>
</dbReference>
<dbReference type="GO" id="GO:0042274">
    <property type="term" value="P:ribosomal small subunit biogenesis"/>
    <property type="evidence" value="ECO:0007669"/>
    <property type="project" value="TreeGrafter"/>
</dbReference>
<dbReference type="GO" id="GO:0006412">
    <property type="term" value="P:translation"/>
    <property type="evidence" value="ECO:0007669"/>
    <property type="project" value="UniProtKB-UniRule"/>
</dbReference>
<dbReference type="CDD" id="cd00165">
    <property type="entry name" value="S4"/>
    <property type="match status" value="1"/>
</dbReference>
<dbReference type="FunFam" id="3.10.290.10:FF:000001">
    <property type="entry name" value="30S ribosomal protein S4"/>
    <property type="match status" value="1"/>
</dbReference>
<dbReference type="Gene3D" id="1.10.1050.10">
    <property type="entry name" value="Ribosomal Protein S4 Delta 41, Chain A, domain 1"/>
    <property type="match status" value="1"/>
</dbReference>
<dbReference type="Gene3D" id="3.10.290.10">
    <property type="entry name" value="RNA-binding S4 domain"/>
    <property type="match status" value="1"/>
</dbReference>
<dbReference type="HAMAP" id="MF_01306_B">
    <property type="entry name" value="Ribosomal_uS4_B"/>
    <property type="match status" value="1"/>
</dbReference>
<dbReference type="InterPro" id="IPR022801">
    <property type="entry name" value="Ribosomal_uS4"/>
</dbReference>
<dbReference type="InterPro" id="IPR005709">
    <property type="entry name" value="Ribosomal_uS4_bac-type"/>
</dbReference>
<dbReference type="InterPro" id="IPR018079">
    <property type="entry name" value="Ribosomal_uS4_CS"/>
</dbReference>
<dbReference type="InterPro" id="IPR001912">
    <property type="entry name" value="Ribosomal_uS4_N"/>
</dbReference>
<dbReference type="InterPro" id="IPR002942">
    <property type="entry name" value="S4_RNA-bd"/>
</dbReference>
<dbReference type="InterPro" id="IPR036986">
    <property type="entry name" value="S4_RNA-bd_sf"/>
</dbReference>
<dbReference type="NCBIfam" id="NF003717">
    <property type="entry name" value="PRK05327.1"/>
    <property type="match status" value="1"/>
</dbReference>
<dbReference type="NCBIfam" id="TIGR01017">
    <property type="entry name" value="rpsD_bact"/>
    <property type="match status" value="1"/>
</dbReference>
<dbReference type="PANTHER" id="PTHR11831">
    <property type="entry name" value="30S 40S RIBOSOMAL PROTEIN"/>
    <property type="match status" value="1"/>
</dbReference>
<dbReference type="PANTHER" id="PTHR11831:SF4">
    <property type="entry name" value="SMALL RIBOSOMAL SUBUNIT PROTEIN US4M"/>
    <property type="match status" value="1"/>
</dbReference>
<dbReference type="Pfam" id="PF00163">
    <property type="entry name" value="Ribosomal_S4"/>
    <property type="match status" value="1"/>
</dbReference>
<dbReference type="Pfam" id="PF01479">
    <property type="entry name" value="S4"/>
    <property type="match status" value="1"/>
</dbReference>
<dbReference type="SMART" id="SM01390">
    <property type="entry name" value="Ribosomal_S4"/>
    <property type="match status" value="1"/>
</dbReference>
<dbReference type="SMART" id="SM00363">
    <property type="entry name" value="S4"/>
    <property type="match status" value="1"/>
</dbReference>
<dbReference type="SUPFAM" id="SSF55174">
    <property type="entry name" value="Alpha-L RNA-binding motif"/>
    <property type="match status" value="1"/>
</dbReference>
<dbReference type="PROSITE" id="PS00632">
    <property type="entry name" value="RIBOSOMAL_S4"/>
    <property type="match status" value="1"/>
</dbReference>
<dbReference type="PROSITE" id="PS50889">
    <property type="entry name" value="S4"/>
    <property type="match status" value="1"/>
</dbReference>
<feature type="chain" id="PRO_0000322329" description="Small ribosomal subunit protein uS4">
    <location>
        <begin position="1"/>
        <end position="205"/>
    </location>
</feature>
<feature type="domain" description="S4 RNA-binding" evidence="1">
    <location>
        <begin position="94"/>
        <end position="157"/>
    </location>
</feature>
<reference key="1">
    <citation type="submission" date="2007-09" db="EMBL/GenBank/DDBJ databases">
        <title>Complete genome sequence of Rickettsia rickettsii.</title>
        <authorList>
            <person name="Madan A."/>
            <person name="Fahey J."/>
            <person name="Helton E."/>
            <person name="Ketteman M."/>
            <person name="Madan A."/>
            <person name="Rodrigues S."/>
            <person name="Sanchez A."/>
            <person name="Dasch G."/>
            <person name="Eremeeva M."/>
        </authorList>
    </citation>
    <scope>NUCLEOTIDE SEQUENCE [LARGE SCALE GENOMIC DNA]</scope>
    <source>
        <strain>Sheila Smith</strain>
    </source>
</reference>
<name>RS4_RICRS</name>
<evidence type="ECO:0000255" key="1">
    <source>
        <dbReference type="HAMAP-Rule" id="MF_01306"/>
    </source>
</evidence>
<evidence type="ECO:0000305" key="2"/>
<sequence>MTKIVRSKYKASRRLGVSLWGDSKDAFNTRNYRPGQHGQNTMIKTSDYGLHLKAKQRLKCHYGRVTEKQFRNIFALAQKMKGNTGENFIGLLESRLDTVVYRMNIAPTIFAARQLVSHGHIKLNGKKADIASIRLKAGDVIEVKESVKQIPLIQESVSKQGQTTPGYLSFDVPSLTGKYLRVPALSDVPYPFEAEVHLVIELYSR</sequence>
<keyword id="KW-0687">Ribonucleoprotein</keyword>
<keyword id="KW-0689">Ribosomal protein</keyword>
<keyword id="KW-0694">RNA-binding</keyword>
<keyword id="KW-0699">rRNA-binding</keyword>
<gene>
    <name evidence="1" type="primary">rpsD</name>
    <name type="ordered locus">A1G_02650</name>
</gene>
<comment type="function">
    <text evidence="1">One of the primary rRNA binding proteins, it binds directly to 16S rRNA where it nucleates assembly of the body of the 30S subunit.</text>
</comment>
<comment type="function">
    <text evidence="1">With S5 and S12 plays an important role in translational accuracy.</text>
</comment>
<comment type="subunit">
    <text evidence="1">Part of the 30S ribosomal subunit. Contacts protein S5. The interaction surface between S4 and S5 is involved in control of translational fidelity.</text>
</comment>
<comment type="similarity">
    <text evidence="1">Belongs to the universal ribosomal protein uS4 family.</text>
</comment>
<organism>
    <name type="scientific">Rickettsia rickettsii (strain Sheila Smith)</name>
    <dbReference type="NCBI Taxonomy" id="392021"/>
    <lineage>
        <taxon>Bacteria</taxon>
        <taxon>Pseudomonadati</taxon>
        <taxon>Pseudomonadota</taxon>
        <taxon>Alphaproteobacteria</taxon>
        <taxon>Rickettsiales</taxon>
        <taxon>Rickettsiaceae</taxon>
        <taxon>Rickettsieae</taxon>
        <taxon>Rickettsia</taxon>
        <taxon>spotted fever group</taxon>
    </lineage>
</organism>